<sequence>MSRVAKAPVVIPAGVEVKLNGQVISIKGKNGELTRTVHSAVEVKQEENTLTFAPREGAVDGWAQAGTTRALLNSMVIGVTEGFTKKLQLVGVGYRAAVKGNVVNLALGFSHPVDHELPAGITAECPTQTEIVLKGADKQVIGQVAADLRAYRRPEPYKGKGVRYADEVVRTKEAKKK</sequence>
<keyword id="KW-0687">Ribonucleoprotein</keyword>
<keyword id="KW-0689">Ribosomal protein</keyword>
<keyword id="KW-0694">RNA-binding</keyword>
<keyword id="KW-0699">rRNA-binding</keyword>
<organism>
    <name type="scientific">Yersinia pseudotuberculosis serotype O:3 (strain YPIII)</name>
    <dbReference type="NCBI Taxonomy" id="502800"/>
    <lineage>
        <taxon>Bacteria</taxon>
        <taxon>Pseudomonadati</taxon>
        <taxon>Pseudomonadota</taxon>
        <taxon>Gammaproteobacteria</taxon>
        <taxon>Enterobacterales</taxon>
        <taxon>Yersiniaceae</taxon>
        <taxon>Yersinia</taxon>
    </lineage>
</organism>
<protein>
    <recommendedName>
        <fullName evidence="1">Large ribosomal subunit protein uL6</fullName>
    </recommendedName>
    <alternativeName>
        <fullName evidence="2">50S ribosomal protein L6</fullName>
    </alternativeName>
</protein>
<accession>B1JIX6</accession>
<dbReference type="EMBL" id="CP000950">
    <property type="protein sequence ID" value="ACA66611.1"/>
    <property type="molecule type" value="Genomic_DNA"/>
</dbReference>
<dbReference type="RefSeq" id="WP_002213334.1">
    <property type="nucleotide sequence ID" value="NZ_CP009792.1"/>
</dbReference>
<dbReference type="SMR" id="B1JIX6"/>
<dbReference type="GeneID" id="96663181"/>
<dbReference type="KEGG" id="ypy:YPK_0298"/>
<dbReference type="PATRIC" id="fig|502800.11.peg.905"/>
<dbReference type="GO" id="GO:0022625">
    <property type="term" value="C:cytosolic large ribosomal subunit"/>
    <property type="evidence" value="ECO:0007669"/>
    <property type="project" value="TreeGrafter"/>
</dbReference>
<dbReference type="GO" id="GO:0019843">
    <property type="term" value="F:rRNA binding"/>
    <property type="evidence" value="ECO:0007669"/>
    <property type="project" value="UniProtKB-UniRule"/>
</dbReference>
<dbReference type="GO" id="GO:0003735">
    <property type="term" value="F:structural constituent of ribosome"/>
    <property type="evidence" value="ECO:0007669"/>
    <property type="project" value="InterPro"/>
</dbReference>
<dbReference type="GO" id="GO:0002181">
    <property type="term" value="P:cytoplasmic translation"/>
    <property type="evidence" value="ECO:0007669"/>
    <property type="project" value="TreeGrafter"/>
</dbReference>
<dbReference type="FunFam" id="3.90.930.12:FF:000001">
    <property type="entry name" value="50S ribosomal protein L6"/>
    <property type="match status" value="1"/>
</dbReference>
<dbReference type="FunFam" id="3.90.930.12:FF:000002">
    <property type="entry name" value="50S ribosomal protein L6"/>
    <property type="match status" value="1"/>
</dbReference>
<dbReference type="Gene3D" id="3.90.930.12">
    <property type="entry name" value="Ribosomal protein L6, alpha-beta domain"/>
    <property type="match status" value="2"/>
</dbReference>
<dbReference type="HAMAP" id="MF_01365_B">
    <property type="entry name" value="Ribosomal_uL6_B"/>
    <property type="match status" value="1"/>
</dbReference>
<dbReference type="InterPro" id="IPR000702">
    <property type="entry name" value="Ribosomal_uL6-like"/>
</dbReference>
<dbReference type="InterPro" id="IPR036789">
    <property type="entry name" value="Ribosomal_uL6-like_a/b-dom_sf"/>
</dbReference>
<dbReference type="InterPro" id="IPR020040">
    <property type="entry name" value="Ribosomal_uL6_a/b-dom"/>
</dbReference>
<dbReference type="InterPro" id="IPR019906">
    <property type="entry name" value="Ribosomal_uL6_bac-type"/>
</dbReference>
<dbReference type="InterPro" id="IPR002358">
    <property type="entry name" value="Ribosomal_uL6_CS"/>
</dbReference>
<dbReference type="NCBIfam" id="TIGR03654">
    <property type="entry name" value="L6_bact"/>
    <property type="match status" value="1"/>
</dbReference>
<dbReference type="PANTHER" id="PTHR11655">
    <property type="entry name" value="60S/50S RIBOSOMAL PROTEIN L6/L9"/>
    <property type="match status" value="1"/>
</dbReference>
<dbReference type="PANTHER" id="PTHR11655:SF14">
    <property type="entry name" value="LARGE RIBOSOMAL SUBUNIT PROTEIN UL6M"/>
    <property type="match status" value="1"/>
</dbReference>
<dbReference type="Pfam" id="PF00347">
    <property type="entry name" value="Ribosomal_L6"/>
    <property type="match status" value="2"/>
</dbReference>
<dbReference type="PIRSF" id="PIRSF002162">
    <property type="entry name" value="Ribosomal_L6"/>
    <property type="match status" value="1"/>
</dbReference>
<dbReference type="PRINTS" id="PR00059">
    <property type="entry name" value="RIBOSOMALL6"/>
</dbReference>
<dbReference type="SUPFAM" id="SSF56053">
    <property type="entry name" value="Ribosomal protein L6"/>
    <property type="match status" value="2"/>
</dbReference>
<dbReference type="PROSITE" id="PS00525">
    <property type="entry name" value="RIBOSOMAL_L6_1"/>
    <property type="match status" value="1"/>
</dbReference>
<proteinExistence type="inferred from homology"/>
<comment type="function">
    <text evidence="1">This protein binds to the 23S rRNA, and is important in its secondary structure. It is located near the subunit interface in the base of the L7/L12 stalk, and near the tRNA binding site of the peptidyltransferase center.</text>
</comment>
<comment type="subunit">
    <text evidence="1">Part of the 50S ribosomal subunit.</text>
</comment>
<comment type="similarity">
    <text evidence="1">Belongs to the universal ribosomal protein uL6 family.</text>
</comment>
<evidence type="ECO:0000255" key="1">
    <source>
        <dbReference type="HAMAP-Rule" id="MF_01365"/>
    </source>
</evidence>
<evidence type="ECO:0000305" key="2"/>
<gene>
    <name evidence="1" type="primary">rplF</name>
    <name type="ordered locus">YPK_0298</name>
</gene>
<reference key="1">
    <citation type="submission" date="2008-02" db="EMBL/GenBank/DDBJ databases">
        <title>Complete sequence of Yersinia pseudotuberculosis YPIII.</title>
        <authorList>
            <consortium name="US DOE Joint Genome Institute"/>
            <person name="Copeland A."/>
            <person name="Lucas S."/>
            <person name="Lapidus A."/>
            <person name="Glavina del Rio T."/>
            <person name="Dalin E."/>
            <person name="Tice H."/>
            <person name="Bruce D."/>
            <person name="Goodwin L."/>
            <person name="Pitluck S."/>
            <person name="Munk A.C."/>
            <person name="Brettin T."/>
            <person name="Detter J.C."/>
            <person name="Han C."/>
            <person name="Tapia R."/>
            <person name="Schmutz J."/>
            <person name="Larimer F."/>
            <person name="Land M."/>
            <person name="Hauser L."/>
            <person name="Challacombe J.F."/>
            <person name="Green L."/>
            <person name="Lindler L.E."/>
            <person name="Nikolich M.P."/>
            <person name="Richardson P."/>
        </authorList>
    </citation>
    <scope>NUCLEOTIDE SEQUENCE [LARGE SCALE GENOMIC DNA]</scope>
    <source>
        <strain>YPIII</strain>
    </source>
</reference>
<name>RL6_YERPY</name>
<feature type="chain" id="PRO_1000144074" description="Large ribosomal subunit protein uL6">
    <location>
        <begin position="1"/>
        <end position="177"/>
    </location>
</feature>